<gene>
    <name type="primary">Cox11</name>
</gene>
<name>COX11_MOUSE</name>
<evidence type="ECO:0000250" key="1">
    <source>
        <dbReference type="UniProtKB" id="Q8GWR0"/>
    </source>
</evidence>
<evidence type="ECO:0000250" key="2">
    <source>
        <dbReference type="UniProtKB" id="Q9Y6N1"/>
    </source>
</evidence>
<evidence type="ECO:0000255" key="3"/>
<evidence type="ECO:0000256" key="4">
    <source>
        <dbReference type="SAM" id="MobiDB-lite"/>
    </source>
</evidence>
<evidence type="ECO:0000305" key="5"/>
<dbReference type="EMBL" id="AK143937">
    <property type="protein sequence ID" value="BAE25618.1"/>
    <property type="molecule type" value="mRNA"/>
</dbReference>
<dbReference type="EMBL" id="AL646046">
    <property type="status" value="NOT_ANNOTATED_CDS"/>
    <property type="molecule type" value="Genomic_DNA"/>
</dbReference>
<dbReference type="EMBL" id="AL672199">
    <property type="status" value="NOT_ANNOTATED_CDS"/>
    <property type="molecule type" value="Genomic_DNA"/>
</dbReference>
<dbReference type="EMBL" id="BC061233">
    <property type="protein sequence ID" value="AAH61233.1"/>
    <property type="molecule type" value="mRNA"/>
</dbReference>
<dbReference type="CCDS" id="CCDS25243.1"/>
<dbReference type="RefSeq" id="NP_950173.1">
    <property type="nucleotide sequence ID" value="NM_199008.2"/>
</dbReference>
<dbReference type="SMR" id="Q6P8I6"/>
<dbReference type="BioGRID" id="213688">
    <property type="interactions" value="1"/>
</dbReference>
<dbReference type="FunCoup" id="Q6P8I6">
    <property type="interactions" value="1682"/>
</dbReference>
<dbReference type="STRING" id="10090.ENSMUSP00000020851"/>
<dbReference type="PhosphoSitePlus" id="Q6P8I6"/>
<dbReference type="SwissPalm" id="Q6P8I6"/>
<dbReference type="PaxDb" id="10090-ENSMUSP00000020851"/>
<dbReference type="PeptideAtlas" id="Q6P8I6"/>
<dbReference type="ProteomicsDB" id="277998"/>
<dbReference type="Antibodypedia" id="30833">
    <property type="antibodies" value="136 antibodies from 26 providers"/>
</dbReference>
<dbReference type="DNASU" id="69802"/>
<dbReference type="Ensembl" id="ENSMUST00000020851.15">
    <property type="protein sequence ID" value="ENSMUSP00000020851.9"/>
    <property type="gene ID" value="ENSMUSG00000020544.15"/>
</dbReference>
<dbReference type="GeneID" id="69802"/>
<dbReference type="KEGG" id="mmu:69802"/>
<dbReference type="UCSC" id="uc007kwz.1">
    <property type="organism name" value="mouse"/>
</dbReference>
<dbReference type="AGR" id="MGI:1917052"/>
<dbReference type="CTD" id="1353"/>
<dbReference type="MGI" id="MGI:1917052">
    <property type="gene designation" value="Cox11"/>
</dbReference>
<dbReference type="VEuPathDB" id="HostDB:ENSMUSG00000020544"/>
<dbReference type="eggNOG" id="KOG2540">
    <property type="taxonomic scope" value="Eukaryota"/>
</dbReference>
<dbReference type="GeneTree" id="ENSGT00390000007512"/>
<dbReference type="HOGENOM" id="CLU_045000_1_0_1"/>
<dbReference type="InParanoid" id="Q6P8I6"/>
<dbReference type="OMA" id="NKLECFC"/>
<dbReference type="OrthoDB" id="1704689at2759"/>
<dbReference type="PhylomeDB" id="Q6P8I6"/>
<dbReference type="TreeFam" id="TF105072"/>
<dbReference type="Reactome" id="R-MMU-9864848">
    <property type="pathway name" value="Complex IV assembly"/>
</dbReference>
<dbReference type="BioGRID-ORCS" id="69802">
    <property type="hits" value="21 hits in 80 CRISPR screens"/>
</dbReference>
<dbReference type="PRO" id="PR:Q6P8I6"/>
<dbReference type="Proteomes" id="UP000000589">
    <property type="component" value="Chromosome 11"/>
</dbReference>
<dbReference type="RNAct" id="Q6P8I6">
    <property type="molecule type" value="protein"/>
</dbReference>
<dbReference type="Bgee" id="ENSMUSG00000020544">
    <property type="expression patterns" value="Expressed in sternocleidomastoid and 224 other cell types or tissues"/>
</dbReference>
<dbReference type="ExpressionAtlas" id="Q6P8I6">
    <property type="expression patterns" value="baseline and differential"/>
</dbReference>
<dbReference type="GO" id="GO:0005743">
    <property type="term" value="C:mitochondrial inner membrane"/>
    <property type="evidence" value="ECO:0000250"/>
    <property type="project" value="UniProtKB"/>
</dbReference>
<dbReference type="GO" id="GO:0005739">
    <property type="term" value="C:mitochondrion"/>
    <property type="evidence" value="ECO:0007005"/>
    <property type="project" value="MGI"/>
</dbReference>
<dbReference type="GO" id="GO:0032991">
    <property type="term" value="C:protein-containing complex"/>
    <property type="evidence" value="ECO:0007669"/>
    <property type="project" value="Ensembl"/>
</dbReference>
<dbReference type="GO" id="GO:0005507">
    <property type="term" value="F:copper ion binding"/>
    <property type="evidence" value="ECO:0007669"/>
    <property type="project" value="InterPro"/>
</dbReference>
<dbReference type="GO" id="GO:0006754">
    <property type="term" value="P:ATP biosynthetic process"/>
    <property type="evidence" value="ECO:0000250"/>
    <property type="project" value="UniProtKB"/>
</dbReference>
<dbReference type="GO" id="GO:0030003">
    <property type="term" value="P:intracellular monoatomic cation homeostasis"/>
    <property type="evidence" value="ECO:0007669"/>
    <property type="project" value="Ensembl"/>
</dbReference>
<dbReference type="FunFam" id="2.60.370.10:FF:000001">
    <property type="entry name" value="COX11 cytochrome c oxidase assembly homolog"/>
    <property type="match status" value="1"/>
</dbReference>
<dbReference type="Gene3D" id="2.60.370.10">
    <property type="entry name" value="Ctag/Cox11"/>
    <property type="match status" value="1"/>
</dbReference>
<dbReference type="HAMAP" id="MF_00155">
    <property type="entry name" value="CtaG"/>
    <property type="match status" value="1"/>
</dbReference>
<dbReference type="InterPro" id="IPR023471">
    <property type="entry name" value="CtaG/Cox11_dom_sf"/>
</dbReference>
<dbReference type="InterPro" id="IPR007533">
    <property type="entry name" value="Cyt_c_oxidase_assmbl_CtaG"/>
</dbReference>
<dbReference type="NCBIfam" id="NF003465">
    <property type="entry name" value="PRK05089.1"/>
    <property type="match status" value="1"/>
</dbReference>
<dbReference type="PANTHER" id="PTHR21320:SF3">
    <property type="entry name" value="CYTOCHROME C OXIDASE ASSEMBLY PROTEIN COX11, MITOCHONDRIAL-RELATED"/>
    <property type="match status" value="1"/>
</dbReference>
<dbReference type="PANTHER" id="PTHR21320">
    <property type="entry name" value="CYTOCHROME C OXIDASE ASSEMBLY PROTEIN COX11-RELATED"/>
    <property type="match status" value="1"/>
</dbReference>
<dbReference type="Pfam" id="PF04442">
    <property type="entry name" value="CtaG_Cox11"/>
    <property type="match status" value="1"/>
</dbReference>
<dbReference type="SUPFAM" id="SSF110111">
    <property type="entry name" value="Ctag/Cox11"/>
    <property type="match status" value="1"/>
</dbReference>
<accession>Q6P8I6</accession>
<accession>Q3UNX9</accession>
<organism>
    <name type="scientific">Mus musculus</name>
    <name type="common">Mouse</name>
    <dbReference type="NCBI Taxonomy" id="10090"/>
    <lineage>
        <taxon>Eukaryota</taxon>
        <taxon>Metazoa</taxon>
        <taxon>Chordata</taxon>
        <taxon>Craniata</taxon>
        <taxon>Vertebrata</taxon>
        <taxon>Euteleostomi</taxon>
        <taxon>Mammalia</taxon>
        <taxon>Eutheria</taxon>
        <taxon>Euarchontoglires</taxon>
        <taxon>Glires</taxon>
        <taxon>Rodentia</taxon>
        <taxon>Myomorpha</taxon>
        <taxon>Muroidea</taxon>
        <taxon>Muridae</taxon>
        <taxon>Murinae</taxon>
        <taxon>Mus</taxon>
        <taxon>Mus</taxon>
    </lineage>
</organism>
<proteinExistence type="evidence at protein level"/>
<sequence>MGGLWCPGWRLVASCGRGWRQPGWSGRTVVNAELVLRPGWDGLGGAERGLRRLGTWKRPCGVRGPATQPPRRPRSSNPFQRAQEDEWRRRNKTVLTYVAAAAVGMLGASYAAVPLYRLYCQTTGLGGSAVAGHSSDQIENMVPVKDRVIKVTFNADVHASLQWNFRPQQTEIYVVPGETALAFYKAKNPTDKPVIGISTYNVVPFEAGQYFNKIQCFCFEEQRLNPQEEVDMPVFFYIDPEFAEDPRMVNVDLITLSYTFFEAKEGHKLPVPGYN</sequence>
<feature type="transit peptide" description="Mitochondrion" evidence="3">
    <location>
        <begin position="1"/>
        <end status="unknown"/>
    </location>
</feature>
<feature type="chain" id="PRO_0000006081" description="Cytochrome c oxidase assembly protein COX11, mitochondrial">
    <location>
        <begin status="unknown"/>
        <end position="275"/>
    </location>
</feature>
<feature type="topological domain" description="Mitochondrial matrix" evidence="2">
    <location>
        <begin status="unknown"/>
        <end position="94"/>
    </location>
</feature>
<feature type="transmembrane region" description="Helical" evidence="3">
    <location>
        <begin position="95"/>
        <end position="113"/>
    </location>
</feature>
<feature type="topological domain" description="Mitochondrial intermembrane" evidence="2">
    <location>
        <begin position="114"/>
        <end position="275"/>
    </location>
</feature>
<feature type="region of interest" description="Disordered" evidence="4">
    <location>
        <begin position="57"/>
        <end position="86"/>
    </location>
</feature>
<protein>
    <recommendedName>
        <fullName>Cytochrome c oxidase assembly protein COX11, mitochondrial</fullName>
    </recommendedName>
</protein>
<reference key="1">
    <citation type="journal article" date="2005" name="Science">
        <title>The transcriptional landscape of the mammalian genome.</title>
        <authorList>
            <person name="Carninci P."/>
            <person name="Kasukawa T."/>
            <person name="Katayama S."/>
            <person name="Gough J."/>
            <person name="Frith M.C."/>
            <person name="Maeda N."/>
            <person name="Oyama R."/>
            <person name="Ravasi T."/>
            <person name="Lenhard B."/>
            <person name="Wells C."/>
            <person name="Kodzius R."/>
            <person name="Shimokawa K."/>
            <person name="Bajic V.B."/>
            <person name="Brenner S.E."/>
            <person name="Batalov S."/>
            <person name="Forrest A.R."/>
            <person name="Zavolan M."/>
            <person name="Davis M.J."/>
            <person name="Wilming L.G."/>
            <person name="Aidinis V."/>
            <person name="Allen J.E."/>
            <person name="Ambesi-Impiombato A."/>
            <person name="Apweiler R."/>
            <person name="Aturaliya R.N."/>
            <person name="Bailey T.L."/>
            <person name="Bansal M."/>
            <person name="Baxter L."/>
            <person name="Beisel K.W."/>
            <person name="Bersano T."/>
            <person name="Bono H."/>
            <person name="Chalk A.M."/>
            <person name="Chiu K.P."/>
            <person name="Choudhary V."/>
            <person name="Christoffels A."/>
            <person name="Clutterbuck D.R."/>
            <person name="Crowe M.L."/>
            <person name="Dalla E."/>
            <person name="Dalrymple B.P."/>
            <person name="de Bono B."/>
            <person name="Della Gatta G."/>
            <person name="di Bernardo D."/>
            <person name="Down T."/>
            <person name="Engstrom P."/>
            <person name="Fagiolini M."/>
            <person name="Faulkner G."/>
            <person name="Fletcher C.F."/>
            <person name="Fukushima T."/>
            <person name="Furuno M."/>
            <person name="Futaki S."/>
            <person name="Gariboldi M."/>
            <person name="Georgii-Hemming P."/>
            <person name="Gingeras T.R."/>
            <person name="Gojobori T."/>
            <person name="Green R.E."/>
            <person name="Gustincich S."/>
            <person name="Harbers M."/>
            <person name="Hayashi Y."/>
            <person name="Hensch T.K."/>
            <person name="Hirokawa N."/>
            <person name="Hill D."/>
            <person name="Huminiecki L."/>
            <person name="Iacono M."/>
            <person name="Ikeo K."/>
            <person name="Iwama A."/>
            <person name="Ishikawa T."/>
            <person name="Jakt M."/>
            <person name="Kanapin A."/>
            <person name="Katoh M."/>
            <person name="Kawasawa Y."/>
            <person name="Kelso J."/>
            <person name="Kitamura H."/>
            <person name="Kitano H."/>
            <person name="Kollias G."/>
            <person name="Krishnan S.P."/>
            <person name="Kruger A."/>
            <person name="Kummerfeld S.K."/>
            <person name="Kurochkin I.V."/>
            <person name="Lareau L.F."/>
            <person name="Lazarevic D."/>
            <person name="Lipovich L."/>
            <person name="Liu J."/>
            <person name="Liuni S."/>
            <person name="McWilliam S."/>
            <person name="Madan Babu M."/>
            <person name="Madera M."/>
            <person name="Marchionni L."/>
            <person name="Matsuda H."/>
            <person name="Matsuzawa S."/>
            <person name="Miki H."/>
            <person name="Mignone F."/>
            <person name="Miyake S."/>
            <person name="Morris K."/>
            <person name="Mottagui-Tabar S."/>
            <person name="Mulder N."/>
            <person name="Nakano N."/>
            <person name="Nakauchi H."/>
            <person name="Ng P."/>
            <person name="Nilsson R."/>
            <person name="Nishiguchi S."/>
            <person name="Nishikawa S."/>
            <person name="Nori F."/>
            <person name="Ohara O."/>
            <person name="Okazaki Y."/>
            <person name="Orlando V."/>
            <person name="Pang K.C."/>
            <person name="Pavan W.J."/>
            <person name="Pavesi G."/>
            <person name="Pesole G."/>
            <person name="Petrovsky N."/>
            <person name="Piazza S."/>
            <person name="Reed J."/>
            <person name="Reid J.F."/>
            <person name="Ring B.Z."/>
            <person name="Ringwald M."/>
            <person name="Rost B."/>
            <person name="Ruan Y."/>
            <person name="Salzberg S.L."/>
            <person name="Sandelin A."/>
            <person name="Schneider C."/>
            <person name="Schoenbach C."/>
            <person name="Sekiguchi K."/>
            <person name="Semple C.A."/>
            <person name="Seno S."/>
            <person name="Sessa L."/>
            <person name="Sheng Y."/>
            <person name="Shibata Y."/>
            <person name="Shimada H."/>
            <person name="Shimada K."/>
            <person name="Silva D."/>
            <person name="Sinclair B."/>
            <person name="Sperling S."/>
            <person name="Stupka E."/>
            <person name="Sugiura K."/>
            <person name="Sultana R."/>
            <person name="Takenaka Y."/>
            <person name="Taki K."/>
            <person name="Tammoja K."/>
            <person name="Tan S.L."/>
            <person name="Tang S."/>
            <person name="Taylor M.S."/>
            <person name="Tegner J."/>
            <person name="Teichmann S.A."/>
            <person name="Ueda H.R."/>
            <person name="van Nimwegen E."/>
            <person name="Verardo R."/>
            <person name="Wei C.L."/>
            <person name="Yagi K."/>
            <person name="Yamanishi H."/>
            <person name="Zabarovsky E."/>
            <person name="Zhu S."/>
            <person name="Zimmer A."/>
            <person name="Hide W."/>
            <person name="Bult C."/>
            <person name="Grimmond S.M."/>
            <person name="Teasdale R.D."/>
            <person name="Liu E.T."/>
            <person name="Brusic V."/>
            <person name="Quackenbush J."/>
            <person name="Wahlestedt C."/>
            <person name="Mattick J.S."/>
            <person name="Hume D.A."/>
            <person name="Kai C."/>
            <person name="Sasaki D."/>
            <person name="Tomaru Y."/>
            <person name="Fukuda S."/>
            <person name="Kanamori-Katayama M."/>
            <person name="Suzuki M."/>
            <person name="Aoki J."/>
            <person name="Arakawa T."/>
            <person name="Iida J."/>
            <person name="Imamura K."/>
            <person name="Itoh M."/>
            <person name="Kato T."/>
            <person name="Kawaji H."/>
            <person name="Kawagashira N."/>
            <person name="Kawashima T."/>
            <person name="Kojima M."/>
            <person name="Kondo S."/>
            <person name="Konno H."/>
            <person name="Nakano K."/>
            <person name="Ninomiya N."/>
            <person name="Nishio T."/>
            <person name="Okada M."/>
            <person name="Plessy C."/>
            <person name="Shibata K."/>
            <person name="Shiraki T."/>
            <person name="Suzuki S."/>
            <person name="Tagami M."/>
            <person name="Waki K."/>
            <person name="Watahiki A."/>
            <person name="Okamura-Oho Y."/>
            <person name="Suzuki H."/>
            <person name="Kawai J."/>
            <person name="Hayashizaki Y."/>
        </authorList>
    </citation>
    <scope>NUCLEOTIDE SEQUENCE [LARGE SCALE MRNA]</scope>
    <source>
        <strain>C57BL/6J</strain>
        <tissue>Kidney</tissue>
    </source>
</reference>
<reference key="2">
    <citation type="journal article" date="2009" name="PLoS Biol.">
        <title>Lineage-specific biology revealed by a finished genome assembly of the mouse.</title>
        <authorList>
            <person name="Church D.M."/>
            <person name="Goodstadt L."/>
            <person name="Hillier L.W."/>
            <person name="Zody M.C."/>
            <person name="Goldstein S."/>
            <person name="She X."/>
            <person name="Bult C.J."/>
            <person name="Agarwala R."/>
            <person name="Cherry J.L."/>
            <person name="DiCuccio M."/>
            <person name="Hlavina W."/>
            <person name="Kapustin Y."/>
            <person name="Meric P."/>
            <person name="Maglott D."/>
            <person name="Birtle Z."/>
            <person name="Marques A.C."/>
            <person name="Graves T."/>
            <person name="Zhou S."/>
            <person name="Teague B."/>
            <person name="Potamousis K."/>
            <person name="Churas C."/>
            <person name="Place M."/>
            <person name="Herschleb J."/>
            <person name="Runnheim R."/>
            <person name="Forrest D."/>
            <person name="Amos-Landgraf J."/>
            <person name="Schwartz D.C."/>
            <person name="Cheng Z."/>
            <person name="Lindblad-Toh K."/>
            <person name="Eichler E.E."/>
            <person name="Ponting C.P."/>
        </authorList>
    </citation>
    <scope>NUCLEOTIDE SEQUENCE [LARGE SCALE GENOMIC DNA]</scope>
    <source>
        <strain>C57BL/6J</strain>
    </source>
</reference>
<reference key="3">
    <citation type="journal article" date="2004" name="Genome Res.">
        <title>The status, quality, and expansion of the NIH full-length cDNA project: the Mammalian Gene Collection (MGC).</title>
        <authorList>
            <consortium name="The MGC Project Team"/>
        </authorList>
    </citation>
    <scope>NUCLEOTIDE SEQUENCE [LARGE SCALE MRNA]</scope>
    <source>
        <tissue>Brain</tissue>
    </source>
</reference>
<reference key="4">
    <citation type="journal article" date="2010" name="Cell">
        <title>A tissue-specific atlas of mouse protein phosphorylation and expression.</title>
        <authorList>
            <person name="Huttlin E.L."/>
            <person name="Jedrychowski M.P."/>
            <person name="Elias J.E."/>
            <person name="Goswami T."/>
            <person name="Rad R."/>
            <person name="Beausoleil S.A."/>
            <person name="Villen J."/>
            <person name="Haas W."/>
            <person name="Sowa M.E."/>
            <person name="Gygi S.P."/>
        </authorList>
    </citation>
    <scope>IDENTIFICATION BY MASS SPECTROMETRY [LARGE SCALE ANALYSIS]</scope>
    <source>
        <tissue>Brain</tissue>
        <tissue>Brown adipose tissue</tissue>
        <tissue>Heart</tissue>
        <tissue>Kidney</tissue>
        <tissue>Liver</tissue>
        <tissue>Spleen</tissue>
        <tissue>Testis</tissue>
    </source>
</reference>
<keyword id="KW-0186">Copper</keyword>
<keyword id="KW-0472">Membrane</keyword>
<keyword id="KW-0496">Mitochondrion</keyword>
<keyword id="KW-0999">Mitochondrion inner membrane</keyword>
<keyword id="KW-1185">Reference proteome</keyword>
<keyword id="KW-0809">Transit peptide</keyword>
<keyword id="KW-0812">Transmembrane</keyword>
<keyword id="KW-1133">Transmembrane helix</keyword>
<comment type="function">
    <text evidence="1">Exerts its effect at some terminal stage of cytochrome c oxidase synthesis, probably by being involved in the insertion of the copper B into subunit I.</text>
</comment>
<comment type="subunit">
    <text evidence="2">Interacts with CNNM4/ACDP4. Interacts with RANBP2.</text>
</comment>
<comment type="subcellular location">
    <subcellularLocation>
        <location evidence="2">Mitochondrion inner membrane</location>
        <topology evidence="3">Single-pass membrane protein</topology>
        <orientation evidence="2">Intermembrane side</orientation>
    </subcellularLocation>
</comment>
<comment type="similarity">
    <text evidence="5">Belongs to the COX11/CtaG family.</text>
</comment>